<gene>
    <name type="primary">NIPAL2</name>
    <name type="synonym">NPAL2</name>
</gene>
<sequence length="383" mass="42156">MAAVAPAGPGDSASAALDELSLNFTYGAPGAGNGSLSGDWYRRNQIHLFGVLLAILGNLVISISLNIQKYSHLQLAQQEHPRPYFKSVLWWGGVLLMAVGETGNFAAYGFAPITLIAPLGCVSVTGSAIISVTFLKDNLRASDLLGTTLAFAGTYLLVNFAPNITQAISARTVQYYLVGWQFLIYVILEILIFCILLYFYKRKGMKHMVILLTLVAILASLTVISVKAVSGMITFSVMDKMQLTYPIFYIMFIIMIASCVFQVKFLNQATKLYNTTTVVPVNHIFFTISAIIAGIIFYQEFLGAPFLTVFIYLFGCFLSFLGVFLVTRNREKEHLQQSYIDFGNIPGKQMLDKIQPDSHSLSYGTLPDGSDSTKSQSGEKKEV</sequence>
<comment type="subcellular location">
    <subcellularLocation>
        <location evidence="3">Membrane</location>
        <topology evidence="3">Multi-pass membrane protein</topology>
    </subcellularLocation>
</comment>
<comment type="alternative products">
    <event type="alternative splicing"/>
    <isoform>
        <id>Q9H841-2</id>
        <name>1</name>
        <sequence type="displayed"/>
    </isoform>
    <isoform>
        <id>Q9H841-1</id>
        <name>2</name>
        <sequence type="described" ref="VSP_060660 VSP_060661"/>
    </isoform>
</comment>
<comment type="similarity">
    <text evidence="3">Belongs to the NIPA family.</text>
</comment>
<reference key="1">
    <citation type="journal article" date="2004" name="Nat. Genet.">
        <title>Complete sequencing and characterization of 21,243 full-length human cDNAs.</title>
        <authorList>
            <person name="Ota T."/>
            <person name="Suzuki Y."/>
            <person name="Nishikawa T."/>
            <person name="Otsuki T."/>
            <person name="Sugiyama T."/>
            <person name="Irie R."/>
            <person name="Wakamatsu A."/>
            <person name="Hayashi K."/>
            <person name="Sato H."/>
            <person name="Nagai K."/>
            <person name="Kimura K."/>
            <person name="Makita H."/>
            <person name="Sekine M."/>
            <person name="Obayashi M."/>
            <person name="Nishi T."/>
            <person name="Shibahara T."/>
            <person name="Tanaka T."/>
            <person name="Ishii S."/>
            <person name="Yamamoto J."/>
            <person name="Saito K."/>
            <person name="Kawai Y."/>
            <person name="Isono Y."/>
            <person name="Nakamura Y."/>
            <person name="Nagahari K."/>
            <person name="Murakami K."/>
            <person name="Yasuda T."/>
            <person name="Iwayanagi T."/>
            <person name="Wagatsuma M."/>
            <person name="Shiratori A."/>
            <person name="Sudo H."/>
            <person name="Hosoiri T."/>
            <person name="Kaku Y."/>
            <person name="Kodaira H."/>
            <person name="Kondo H."/>
            <person name="Sugawara M."/>
            <person name="Takahashi M."/>
            <person name="Kanda K."/>
            <person name="Yokoi T."/>
            <person name="Furuya T."/>
            <person name="Kikkawa E."/>
            <person name="Omura Y."/>
            <person name="Abe K."/>
            <person name="Kamihara K."/>
            <person name="Katsuta N."/>
            <person name="Sato K."/>
            <person name="Tanikawa M."/>
            <person name="Yamazaki M."/>
            <person name="Ninomiya K."/>
            <person name="Ishibashi T."/>
            <person name="Yamashita H."/>
            <person name="Murakawa K."/>
            <person name="Fujimori K."/>
            <person name="Tanai H."/>
            <person name="Kimata M."/>
            <person name="Watanabe M."/>
            <person name="Hiraoka S."/>
            <person name="Chiba Y."/>
            <person name="Ishida S."/>
            <person name="Ono Y."/>
            <person name="Takiguchi S."/>
            <person name="Watanabe S."/>
            <person name="Yosida M."/>
            <person name="Hotuta T."/>
            <person name="Kusano J."/>
            <person name="Kanehori K."/>
            <person name="Takahashi-Fujii A."/>
            <person name="Hara H."/>
            <person name="Tanase T.-O."/>
            <person name="Nomura Y."/>
            <person name="Togiya S."/>
            <person name="Komai F."/>
            <person name="Hara R."/>
            <person name="Takeuchi K."/>
            <person name="Arita M."/>
            <person name="Imose N."/>
            <person name="Musashino K."/>
            <person name="Yuuki H."/>
            <person name="Oshima A."/>
            <person name="Sasaki N."/>
            <person name="Aotsuka S."/>
            <person name="Yoshikawa Y."/>
            <person name="Matsunawa H."/>
            <person name="Ichihara T."/>
            <person name="Shiohata N."/>
            <person name="Sano S."/>
            <person name="Moriya S."/>
            <person name="Momiyama H."/>
            <person name="Satoh N."/>
            <person name="Takami S."/>
            <person name="Terashima Y."/>
            <person name="Suzuki O."/>
            <person name="Nakagawa S."/>
            <person name="Senoh A."/>
            <person name="Mizoguchi H."/>
            <person name="Goto Y."/>
            <person name="Shimizu F."/>
            <person name="Wakebe H."/>
            <person name="Hishigaki H."/>
            <person name="Watanabe T."/>
            <person name="Sugiyama A."/>
            <person name="Takemoto M."/>
            <person name="Kawakami B."/>
            <person name="Yamazaki M."/>
            <person name="Watanabe K."/>
            <person name="Kumagai A."/>
            <person name="Itakura S."/>
            <person name="Fukuzumi Y."/>
            <person name="Fujimori Y."/>
            <person name="Komiyama M."/>
            <person name="Tashiro H."/>
            <person name="Tanigami A."/>
            <person name="Fujiwara T."/>
            <person name="Ono T."/>
            <person name="Yamada K."/>
            <person name="Fujii Y."/>
            <person name="Ozaki K."/>
            <person name="Hirao M."/>
            <person name="Ohmori Y."/>
            <person name="Kawabata A."/>
            <person name="Hikiji T."/>
            <person name="Kobatake N."/>
            <person name="Inagaki H."/>
            <person name="Ikema Y."/>
            <person name="Okamoto S."/>
            <person name="Okitani R."/>
            <person name="Kawakami T."/>
            <person name="Noguchi S."/>
            <person name="Itoh T."/>
            <person name="Shigeta K."/>
            <person name="Senba T."/>
            <person name="Matsumura K."/>
            <person name="Nakajima Y."/>
            <person name="Mizuno T."/>
            <person name="Morinaga M."/>
            <person name="Sasaki M."/>
            <person name="Togashi T."/>
            <person name="Oyama M."/>
            <person name="Hata H."/>
            <person name="Watanabe M."/>
            <person name="Komatsu T."/>
            <person name="Mizushima-Sugano J."/>
            <person name="Satoh T."/>
            <person name="Shirai Y."/>
            <person name="Takahashi Y."/>
            <person name="Nakagawa K."/>
            <person name="Okumura K."/>
            <person name="Nagase T."/>
            <person name="Nomura N."/>
            <person name="Kikuchi H."/>
            <person name="Masuho Y."/>
            <person name="Yamashita R."/>
            <person name="Nakai K."/>
            <person name="Yada T."/>
            <person name="Nakamura Y."/>
            <person name="Ohara O."/>
            <person name="Isogai T."/>
            <person name="Sugano S."/>
        </authorList>
    </citation>
    <scope>NUCLEOTIDE SEQUENCE [LARGE SCALE MRNA] (ISOFORM 2)</scope>
</reference>
<reference key="2">
    <citation type="journal article" date="2006" name="Nature">
        <title>DNA sequence and analysis of human chromosome 8.</title>
        <authorList>
            <person name="Nusbaum C."/>
            <person name="Mikkelsen T.S."/>
            <person name="Zody M.C."/>
            <person name="Asakawa S."/>
            <person name="Taudien S."/>
            <person name="Garber M."/>
            <person name="Kodira C.D."/>
            <person name="Schueler M.G."/>
            <person name="Shimizu A."/>
            <person name="Whittaker C.A."/>
            <person name="Chang J.L."/>
            <person name="Cuomo C.A."/>
            <person name="Dewar K."/>
            <person name="FitzGerald M.G."/>
            <person name="Yang X."/>
            <person name="Allen N.R."/>
            <person name="Anderson S."/>
            <person name="Asakawa T."/>
            <person name="Blechschmidt K."/>
            <person name="Bloom T."/>
            <person name="Borowsky M.L."/>
            <person name="Butler J."/>
            <person name="Cook A."/>
            <person name="Corum B."/>
            <person name="DeArellano K."/>
            <person name="DeCaprio D."/>
            <person name="Dooley K.T."/>
            <person name="Dorris L. III"/>
            <person name="Engels R."/>
            <person name="Gloeckner G."/>
            <person name="Hafez N."/>
            <person name="Hagopian D.S."/>
            <person name="Hall J.L."/>
            <person name="Ishikawa S.K."/>
            <person name="Jaffe D.B."/>
            <person name="Kamat A."/>
            <person name="Kudoh J."/>
            <person name="Lehmann R."/>
            <person name="Lokitsang T."/>
            <person name="Macdonald P."/>
            <person name="Major J.E."/>
            <person name="Matthews C.D."/>
            <person name="Mauceli E."/>
            <person name="Menzel U."/>
            <person name="Mihalev A.H."/>
            <person name="Minoshima S."/>
            <person name="Murayama Y."/>
            <person name="Naylor J.W."/>
            <person name="Nicol R."/>
            <person name="Nguyen C."/>
            <person name="O'Leary S.B."/>
            <person name="O'Neill K."/>
            <person name="Parker S.C.J."/>
            <person name="Polley A."/>
            <person name="Raymond C.K."/>
            <person name="Reichwald K."/>
            <person name="Rodriguez J."/>
            <person name="Sasaki T."/>
            <person name="Schilhabel M."/>
            <person name="Siddiqui R."/>
            <person name="Smith C.L."/>
            <person name="Sneddon T.P."/>
            <person name="Talamas J.A."/>
            <person name="Tenzin P."/>
            <person name="Topham K."/>
            <person name="Venkataraman V."/>
            <person name="Wen G."/>
            <person name="Yamazaki S."/>
            <person name="Young S.K."/>
            <person name="Zeng Q."/>
            <person name="Zimmer A.R."/>
            <person name="Rosenthal A."/>
            <person name="Birren B.W."/>
            <person name="Platzer M."/>
            <person name="Shimizu N."/>
            <person name="Lander E.S."/>
        </authorList>
    </citation>
    <scope>NUCLEOTIDE SEQUENCE [LARGE SCALE GENOMIC DNA]</scope>
</reference>
<reference key="3">
    <citation type="journal article" date="2004" name="Genome Res.">
        <title>The status, quality, and expansion of the NIH full-length cDNA project: the Mammalian Gene Collection (MGC).</title>
        <authorList>
            <consortium name="The MGC Project Team"/>
        </authorList>
    </citation>
    <scope>NUCLEOTIDE SEQUENCE [LARGE SCALE MRNA] (ISOFORM 1)</scope>
</reference>
<feature type="chain" id="PRO_0000242148" description="NIPA-like protein 2">
    <location>
        <begin position="1"/>
        <end position="383"/>
    </location>
</feature>
<feature type="transmembrane region" description="Helical" evidence="1">
    <location>
        <begin position="46"/>
        <end position="66"/>
    </location>
</feature>
<feature type="transmembrane region" description="Helical" evidence="1">
    <location>
        <begin position="88"/>
        <end position="108"/>
    </location>
</feature>
<feature type="transmembrane region" description="Helical" evidence="1">
    <location>
        <begin position="110"/>
        <end position="130"/>
    </location>
</feature>
<feature type="transmembrane region" description="Helical" evidence="1">
    <location>
        <begin position="144"/>
        <end position="164"/>
    </location>
</feature>
<feature type="transmembrane region" description="Helical" evidence="1">
    <location>
        <begin position="177"/>
        <end position="197"/>
    </location>
</feature>
<feature type="transmembrane region" description="Helical" evidence="1">
    <location>
        <begin position="209"/>
        <end position="229"/>
    </location>
</feature>
<feature type="transmembrane region" description="Helical" evidence="1">
    <location>
        <begin position="243"/>
        <end position="263"/>
    </location>
</feature>
<feature type="transmembrane region" description="Helical" evidence="1">
    <location>
        <begin position="278"/>
        <end position="298"/>
    </location>
</feature>
<feature type="transmembrane region" description="Helical" evidence="1">
    <location>
        <begin position="306"/>
        <end position="326"/>
    </location>
</feature>
<feature type="region of interest" description="Disordered" evidence="2">
    <location>
        <begin position="355"/>
        <end position="383"/>
    </location>
</feature>
<feature type="glycosylation site" description="N-linked (GlcNAc...) asparagine" evidence="1">
    <location>
        <position position="23"/>
    </location>
</feature>
<feature type="glycosylation site" description="N-linked (GlcNAc...) asparagine" evidence="1">
    <location>
        <position position="33"/>
    </location>
</feature>
<feature type="glycosylation site" description="N-linked (GlcNAc...) asparagine" evidence="1">
    <location>
        <position position="274"/>
    </location>
</feature>
<feature type="splice variant" id="VSP_060660" description="In isoform 2." evidence="3">
    <original>GKQMLDKIQPDSHSLSYGTLPD</original>
    <variation>DTTPERKAWRETNVGQNTTRFT</variation>
    <location>
        <begin position="347"/>
        <end position="368"/>
    </location>
</feature>
<feature type="splice variant" id="VSP_060661" description="In isoform 2." evidence="3">
    <location>
        <begin position="369"/>
        <end position="383"/>
    </location>
</feature>
<proteinExistence type="evidence at protein level"/>
<accession>Q9H841</accession>
<accession>A2RTY8</accession>
<dbReference type="EMBL" id="AK024017">
    <property type="protein sequence ID" value="BAB14779.1"/>
    <property type="molecule type" value="mRNA"/>
</dbReference>
<dbReference type="EMBL" id="AP003438">
    <property type="status" value="NOT_ANNOTATED_CDS"/>
    <property type="molecule type" value="Genomic_DNA"/>
</dbReference>
<dbReference type="EMBL" id="AP003439">
    <property type="status" value="NOT_ANNOTATED_CDS"/>
    <property type="molecule type" value="Genomic_DNA"/>
</dbReference>
<dbReference type="EMBL" id="BC132687">
    <property type="protein sequence ID" value="AAI32688.1"/>
    <property type="molecule type" value="mRNA"/>
</dbReference>
<dbReference type="EMBL" id="BC144055">
    <property type="protein sequence ID" value="AAI44056.1"/>
    <property type="molecule type" value="mRNA"/>
</dbReference>
<dbReference type="CCDS" id="CCDS6278.1">
    <molecule id="Q9H841-1"/>
</dbReference>
<dbReference type="CCDS" id="CCDS83310.1">
    <molecule id="Q9H841-2"/>
</dbReference>
<dbReference type="RefSeq" id="NP_001308564.1">
    <molecule id="Q9H841-2"/>
    <property type="nucleotide sequence ID" value="NM_001321635.2"/>
</dbReference>
<dbReference type="RefSeq" id="NP_001308565.1">
    <property type="nucleotide sequence ID" value="NM_001321636.1"/>
</dbReference>
<dbReference type="RefSeq" id="NP_079035.1">
    <molecule id="Q9H841-1"/>
    <property type="nucleotide sequence ID" value="NM_024759.3"/>
</dbReference>
<dbReference type="BioGRID" id="122910">
    <property type="interactions" value="2"/>
</dbReference>
<dbReference type="FunCoup" id="Q9H841">
    <property type="interactions" value="81"/>
</dbReference>
<dbReference type="IntAct" id="Q9H841">
    <property type="interactions" value="1"/>
</dbReference>
<dbReference type="MINT" id="Q9H841"/>
<dbReference type="STRING" id="9606.ENSP00000407087"/>
<dbReference type="TCDB" id="2.A.7.25.10">
    <property type="family name" value="the drug/metabolite transporter (dmt) superfamily"/>
</dbReference>
<dbReference type="GlyCosmos" id="Q9H841">
    <property type="glycosylation" value="3 sites, No reported glycans"/>
</dbReference>
<dbReference type="GlyGen" id="Q9H841">
    <property type="glycosylation" value="3 sites"/>
</dbReference>
<dbReference type="iPTMnet" id="Q9H841"/>
<dbReference type="PhosphoSitePlus" id="Q9H841"/>
<dbReference type="BioMuta" id="NIPAL2"/>
<dbReference type="DMDM" id="74733759"/>
<dbReference type="jPOST" id="Q9H841"/>
<dbReference type="MassIVE" id="Q9H841"/>
<dbReference type="PaxDb" id="9606-ENSP00000339256"/>
<dbReference type="PeptideAtlas" id="Q9H841"/>
<dbReference type="ProteomicsDB" id="490"/>
<dbReference type="Antibodypedia" id="26067">
    <property type="antibodies" value="92 antibodies from 17 providers"/>
</dbReference>
<dbReference type="DNASU" id="79815"/>
<dbReference type="Ensembl" id="ENST00000341166.3">
    <molecule id="Q9H841-1"/>
    <property type="protein sequence ID" value="ENSP00000339256.3"/>
    <property type="gene ID" value="ENSG00000104361.10"/>
</dbReference>
<dbReference type="Ensembl" id="ENST00000430223.7">
    <molecule id="Q9H841-2"/>
    <property type="protein sequence ID" value="ENSP00000407087.2"/>
    <property type="gene ID" value="ENSG00000104361.10"/>
</dbReference>
<dbReference type="GeneID" id="79815"/>
<dbReference type="KEGG" id="hsa:79815"/>
<dbReference type="MANE-Select" id="ENST00000430223.7">
    <property type="protein sequence ID" value="ENSP00000407087.2"/>
    <property type="RefSeq nucleotide sequence ID" value="NM_001321635.2"/>
    <property type="RefSeq protein sequence ID" value="NP_001308564.1"/>
</dbReference>
<dbReference type="UCSC" id="uc003yil.2">
    <molecule id="Q9H841-2"/>
    <property type="organism name" value="human"/>
</dbReference>
<dbReference type="AGR" id="HGNC:25854"/>
<dbReference type="CTD" id="79815"/>
<dbReference type="DisGeNET" id="79815"/>
<dbReference type="GeneCards" id="NIPAL2"/>
<dbReference type="HGNC" id="HGNC:25854">
    <property type="gene designation" value="NIPAL2"/>
</dbReference>
<dbReference type="HPA" id="ENSG00000104361">
    <property type="expression patterns" value="Low tissue specificity"/>
</dbReference>
<dbReference type="neXtProt" id="NX_Q9H841"/>
<dbReference type="OpenTargets" id="ENSG00000104361"/>
<dbReference type="PharmGKB" id="PA164723926"/>
<dbReference type="VEuPathDB" id="HostDB:ENSG00000104361"/>
<dbReference type="eggNOG" id="KOG2922">
    <property type="taxonomic scope" value="Eukaryota"/>
</dbReference>
<dbReference type="GeneTree" id="ENSGT00940000159321"/>
<dbReference type="HOGENOM" id="CLU_012349_2_0_1"/>
<dbReference type="InParanoid" id="Q9H841"/>
<dbReference type="OMA" id="HLQQSFI"/>
<dbReference type="OrthoDB" id="165382at2759"/>
<dbReference type="PAN-GO" id="Q9H841">
    <property type="GO annotations" value="2 GO annotations based on evolutionary models"/>
</dbReference>
<dbReference type="PhylomeDB" id="Q9H841"/>
<dbReference type="TreeFam" id="TF313214"/>
<dbReference type="PathwayCommons" id="Q9H841"/>
<dbReference type="Reactome" id="R-HSA-5223345">
    <property type="pathway name" value="Miscellaneous transport and binding events"/>
</dbReference>
<dbReference type="SignaLink" id="Q9H841"/>
<dbReference type="BioGRID-ORCS" id="79815">
    <property type="hits" value="17 hits in 1140 CRISPR screens"/>
</dbReference>
<dbReference type="ChiTaRS" id="NIPAL2">
    <property type="organism name" value="human"/>
</dbReference>
<dbReference type="GenomeRNAi" id="79815"/>
<dbReference type="Pharos" id="Q9H841">
    <property type="development level" value="Tdark"/>
</dbReference>
<dbReference type="PRO" id="PR:Q9H841"/>
<dbReference type="Proteomes" id="UP000005640">
    <property type="component" value="Chromosome 8"/>
</dbReference>
<dbReference type="RNAct" id="Q9H841">
    <property type="molecule type" value="protein"/>
</dbReference>
<dbReference type="Bgee" id="ENSG00000104361">
    <property type="expression patterns" value="Expressed in upper arm skin and 173 other cell types or tissues"/>
</dbReference>
<dbReference type="GO" id="GO:0016020">
    <property type="term" value="C:membrane"/>
    <property type="evidence" value="ECO:0000318"/>
    <property type="project" value="GO_Central"/>
</dbReference>
<dbReference type="GO" id="GO:0015095">
    <property type="term" value="F:magnesium ion transmembrane transporter activity"/>
    <property type="evidence" value="ECO:0007669"/>
    <property type="project" value="InterPro"/>
</dbReference>
<dbReference type="GO" id="GO:0015693">
    <property type="term" value="P:magnesium ion transport"/>
    <property type="evidence" value="ECO:0000318"/>
    <property type="project" value="GO_Central"/>
</dbReference>
<dbReference type="InterPro" id="IPR008521">
    <property type="entry name" value="Mg_trans_NIPA"/>
</dbReference>
<dbReference type="PANTHER" id="PTHR12570">
    <property type="match status" value="1"/>
</dbReference>
<dbReference type="PANTHER" id="PTHR12570:SF16">
    <property type="entry name" value="NIPA-LIKE PROTEIN 2"/>
    <property type="match status" value="1"/>
</dbReference>
<dbReference type="Pfam" id="PF05653">
    <property type="entry name" value="Mg_trans_NIPA"/>
    <property type="match status" value="1"/>
</dbReference>
<dbReference type="SUPFAM" id="SSF103481">
    <property type="entry name" value="Multidrug resistance efflux transporter EmrE"/>
    <property type="match status" value="1"/>
</dbReference>
<protein>
    <recommendedName>
        <fullName>NIPA-like protein 2</fullName>
    </recommendedName>
</protein>
<name>NPAL2_HUMAN</name>
<evidence type="ECO:0000255" key="1"/>
<evidence type="ECO:0000256" key="2">
    <source>
        <dbReference type="SAM" id="MobiDB-lite"/>
    </source>
</evidence>
<evidence type="ECO:0000305" key="3"/>
<organism>
    <name type="scientific">Homo sapiens</name>
    <name type="common">Human</name>
    <dbReference type="NCBI Taxonomy" id="9606"/>
    <lineage>
        <taxon>Eukaryota</taxon>
        <taxon>Metazoa</taxon>
        <taxon>Chordata</taxon>
        <taxon>Craniata</taxon>
        <taxon>Vertebrata</taxon>
        <taxon>Euteleostomi</taxon>
        <taxon>Mammalia</taxon>
        <taxon>Eutheria</taxon>
        <taxon>Euarchontoglires</taxon>
        <taxon>Primates</taxon>
        <taxon>Haplorrhini</taxon>
        <taxon>Catarrhini</taxon>
        <taxon>Hominidae</taxon>
        <taxon>Homo</taxon>
    </lineage>
</organism>
<keyword id="KW-0025">Alternative splicing</keyword>
<keyword id="KW-0325">Glycoprotein</keyword>
<keyword id="KW-0472">Membrane</keyword>
<keyword id="KW-1267">Proteomics identification</keyword>
<keyword id="KW-1185">Reference proteome</keyword>
<keyword id="KW-0812">Transmembrane</keyword>
<keyword id="KW-1133">Transmembrane helix</keyword>